<gene>
    <name evidence="1" type="primary">astE</name>
    <name type="ordered locus">STY1807</name>
    <name type="ordered locus">t1186</name>
</gene>
<dbReference type="EC" id="3.5.1.96" evidence="1"/>
<dbReference type="EMBL" id="AL513382">
    <property type="protein sequence ID" value="CAD02047.1"/>
    <property type="molecule type" value="Genomic_DNA"/>
</dbReference>
<dbReference type="EMBL" id="AE014613">
    <property type="protein sequence ID" value="AAO68842.1"/>
    <property type="molecule type" value="Genomic_DNA"/>
</dbReference>
<dbReference type="RefSeq" id="NP_456205.1">
    <property type="nucleotide sequence ID" value="NC_003198.1"/>
</dbReference>
<dbReference type="RefSeq" id="WP_000368452.1">
    <property type="nucleotide sequence ID" value="NZ_WSUR01000034.1"/>
</dbReference>
<dbReference type="SMR" id="Q8Z6G3"/>
<dbReference type="STRING" id="220341.gene:17585739"/>
<dbReference type="KEGG" id="stt:t1186"/>
<dbReference type="KEGG" id="sty:STY1807"/>
<dbReference type="PATRIC" id="fig|220341.7.peg.1819"/>
<dbReference type="eggNOG" id="COG2988">
    <property type="taxonomic scope" value="Bacteria"/>
</dbReference>
<dbReference type="HOGENOM" id="CLU_071608_0_0_6"/>
<dbReference type="OMA" id="CAVHGNE"/>
<dbReference type="OrthoDB" id="5290473at2"/>
<dbReference type="UniPathway" id="UPA00185">
    <property type="reaction ID" value="UER00283"/>
</dbReference>
<dbReference type="Proteomes" id="UP000000541">
    <property type="component" value="Chromosome"/>
</dbReference>
<dbReference type="Proteomes" id="UP000002670">
    <property type="component" value="Chromosome"/>
</dbReference>
<dbReference type="GO" id="GO:0016788">
    <property type="term" value="F:hydrolase activity, acting on ester bonds"/>
    <property type="evidence" value="ECO:0007669"/>
    <property type="project" value="UniProtKB-UniRule"/>
</dbReference>
<dbReference type="GO" id="GO:0009017">
    <property type="term" value="F:succinylglutamate desuccinylase activity"/>
    <property type="evidence" value="ECO:0007669"/>
    <property type="project" value="UniProtKB-EC"/>
</dbReference>
<dbReference type="GO" id="GO:0008270">
    <property type="term" value="F:zinc ion binding"/>
    <property type="evidence" value="ECO:0007669"/>
    <property type="project" value="UniProtKB-UniRule"/>
</dbReference>
<dbReference type="GO" id="GO:0019544">
    <property type="term" value="P:arginine catabolic process to glutamate"/>
    <property type="evidence" value="ECO:0007669"/>
    <property type="project" value="UniProtKB-UniRule"/>
</dbReference>
<dbReference type="GO" id="GO:0019545">
    <property type="term" value="P:arginine catabolic process to succinate"/>
    <property type="evidence" value="ECO:0007669"/>
    <property type="project" value="UniProtKB-UniRule"/>
</dbReference>
<dbReference type="CDD" id="cd03855">
    <property type="entry name" value="M14_ASTE"/>
    <property type="match status" value="1"/>
</dbReference>
<dbReference type="FunFam" id="3.40.630.10:FF:000017">
    <property type="entry name" value="Succinylglutamate desuccinylase"/>
    <property type="match status" value="1"/>
</dbReference>
<dbReference type="Gene3D" id="3.40.630.10">
    <property type="entry name" value="Zn peptidases"/>
    <property type="match status" value="1"/>
</dbReference>
<dbReference type="HAMAP" id="MF_00767">
    <property type="entry name" value="Arg_catab_AstE"/>
    <property type="match status" value="1"/>
</dbReference>
<dbReference type="InterPro" id="IPR050178">
    <property type="entry name" value="AspA/AstE_fam"/>
</dbReference>
<dbReference type="InterPro" id="IPR055438">
    <property type="entry name" value="AstE_AspA_cat"/>
</dbReference>
<dbReference type="InterPro" id="IPR007036">
    <property type="entry name" value="Aste_AspA_hybrid_dom"/>
</dbReference>
<dbReference type="InterPro" id="IPR016681">
    <property type="entry name" value="SuccinylGlu_desuccinylase"/>
</dbReference>
<dbReference type="NCBIfam" id="TIGR03242">
    <property type="entry name" value="arg_catab_astE"/>
    <property type="match status" value="1"/>
</dbReference>
<dbReference type="NCBIfam" id="NF003706">
    <property type="entry name" value="PRK05324.1"/>
    <property type="match status" value="1"/>
</dbReference>
<dbReference type="PANTHER" id="PTHR15162">
    <property type="entry name" value="ASPARTOACYLASE"/>
    <property type="match status" value="1"/>
</dbReference>
<dbReference type="PANTHER" id="PTHR15162:SF7">
    <property type="entry name" value="SUCCINYLGLUTAMATE DESUCCINYLASE"/>
    <property type="match status" value="1"/>
</dbReference>
<dbReference type="Pfam" id="PF24827">
    <property type="entry name" value="AstE_AspA_cat"/>
    <property type="match status" value="1"/>
</dbReference>
<dbReference type="Pfam" id="PF04952">
    <property type="entry name" value="AstE_AspA_hybrid"/>
    <property type="match status" value="1"/>
</dbReference>
<dbReference type="PIRSF" id="PIRSF017020">
    <property type="entry name" value="AstE"/>
    <property type="match status" value="1"/>
</dbReference>
<dbReference type="SUPFAM" id="SSF53187">
    <property type="entry name" value="Zn-dependent exopeptidases"/>
    <property type="match status" value="1"/>
</dbReference>
<organism>
    <name type="scientific">Salmonella typhi</name>
    <dbReference type="NCBI Taxonomy" id="90370"/>
    <lineage>
        <taxon>Bacteria</taxon>
        <taxon>Pseudomonadati</taxon>
        <taxon>Pseudomonadota</taxon>
        <taxon>Gammaproteobacteria</taxon>
        <taxon>Enterobacterales</taxon>
        <taxon>Enterobacteriaceae</taxon>
        <taxon>Salmonella</taxon>
    </lineage>
</organism>
<name>ASTE_SALTI</name>
<proteinExistence type="inferred from homology"/>
<reference key="1">
    <citation type="journal article" date="2001" name="Nature">
        <title>Complete genome sequence of a multiple drug resistant Salmonella enterica serovar Typhi CT18.</title>
        <authorList>
            <person name="Parkhill J."/>
            <person name="Dougan G."/>
            <person name="James K.D."/>
            <person name="Thomson N.R."/>
            <person name="Pickard D."/>
            <person name="Wain J."/>
            <person name="Churcher C.M."/>
            <person name="Mungall K.L."/>
            <person name="Bentley S.D."/>
            <person name="Holden M.T.G."/>
            <person name="Sebaihia M."/>
            <person name="Baker S."/>
            <person name="Basham D."/>
            <person name="Brooks K."/>
            <person name="Chillingworth T."/>
            <person name="Connerton P."/>
            <person name="Cronin A."/>
            <person name="Davis P."/>
            <person name="Davies R.M."/>
            <person name="Dowd L."/>
            <person name="White N."/>
            <person name="Farrar J."/>
            <person name="Feltwell T."/>
            <person name="Hamlin N."/>
            <person name="Haque A."/>
            <person name="Hien T.T."/>
            <person name="Holroyd S."/>
            <person name="Jagels K."/>
            <person name="Krogh A."/>
            <person name="Larsen T.S."/>
            <person name="Leather S."/>
            <person name="Moule S."/>
            <person name="O'Gaora P."/>
            <person name="Parry C."/>
            <person name="Quail M.A."/>
            <person name="Rutherford K.M."/>
            <person name="Simmonds M."/>
            <person name="Skelton J."/>
            <person name="Stevens K."/>
            <person name="Whitehead S."/>
            <person name="Barrell B.G."/>
        </authorList>
    </citation>
    <scope>NUCLEOTIDE SEQUENCE [LARGE SCALE GENOMIC DNA]</scope>
    <source>
        <strain>CT18</strain>
    </source>
</reference>
<reference key="2">
    <citation type="journal article" date="2003" name="J. Bacteriol.">
        <title>Comparative genomics of Salmonella enterica serovar Typhi strains Ty2 and CT18.</title>
        <authorList>
            <person name="Deng W."/>
            <person name="Liou S.-R."/>
            <person name="Plunkett G. III"/>
            <person name="Mayhew G.F."/>
            <person name="Rose D.J."/>
            <person name="Burland V."/>
            <person name="Kodoyianni V."/>
            <person name="Schwartz D.C."/>
            <person name="Blattner F.R."/>
        </authorList>
    </citation>
    <scope>NUCLEOTIDE SEQUENCE [LARGE SCALE GENOMIC DNA]</scope>
    <source>
        <strain>ATCC 700931 / Ty2</strain>
    </source>
</reference>
<sequence length="322" mass="35474">MDNFLALTLSGTTPRVTQGKGAGFRWRWLGHGLLELTPDAPVDRALILSAGIHGNETAPVEMLDKLLSALYSGSLTLTWRVLVVLGNPQALAAGIRYCHSDMNRMFGGRWQSFAESDETRRARELELSLETFFSSGQARVRWHLDLHTAIRGSHHLRFGVLPQRDRPWEADFLAWLGAAGLEALVFHQAPGGTFTHFSSEHFGALSCTLELGKALPFGQNDLTQFSVTSQALSALLSGVETSTSFSPPLRYRVVSQITRHSDKFALYMDAQTLNFTAFAKGTLLAEEGDKRVTVTHDVEYVLFPNSSVACGLRAGLMLERLP</sequence>
<comment type="function">
    <text evidence="1">Transforms N(2)-succinylglutamate into succinate and glutamate.</text>
</comment>
<comment type="catalytic activity">
    <reaction evidence="1">
        <text>N-succinyl-L-glutamate + H2O = L-glutamate + succinate</text>
        <dbReference type="Rhea" id="RHEA:15169"/>
        <dbReference type="ChEBI" id="CHEBI:15377"/>
        <dbReference type="ChEBI" id="CHEBI:29985"/>
        <dbReference type="ChEBI" id="CHEBI:30031"/>
        <dbReference type="ChEBI" id="CHEBI:58763"/>
        <dbReference type="EC" id="3.5.1.96"/>
    </reaction>
</comment>
<comment type="cofactor">
    <cofactor evidence="1">
        <name>Zn(2+)</name>
        <dbReference type="ChEBI" id="CHEBI:29105"/>
    </cofactor>
    <text evidence="1">Binds 1 zinc ion per subunit.</text>
</comment>
<comment type="pathway">
    <text evidence="1">Amino-acid degradation; L-arginine degradation via AST pathway; L-glutamate and succinate from L-arginine: step 5/5.</text>
</comment>
<comment type="similarity">
    <text evidence="1">Belongs to the AspA/AstE family. Succinylglutamate desuccinylase subfamily.</text>
</comment>
<protein>
    <recommendedName>
        <fullName evidence="1">Succinylglutamate desuccinylase</fullName>
        <ecNumber evidence="1">3.5.1.96</ecNumber>
    </recommendedName>
</protein>
<accession>Q8Z6G3</accession>
<keyword id="KW-0056">Arginine metabolism</keyword>
<keyword id="KW-0378">Hydrolase</keyword>
<keyword id="KW-0479">Metal-binding</keyword>
<keyword id="KW-0862">Zinc</keyword>
<evidence type="ECO:0000255" key="1">
    <source>
        <dbReference type="HAMAP-Rule" id="MF_00767"/>
    </source>
</evidence>
<feature type="chain" id="PRO_0000174646" description="Succinylglutamate desuccinylase">
    <location>
        <begin position="1"/>
        <end position="322"/>
    </location>
</feature>
<feature type="active site" evidence="1">
    <location>
        <position position="210"/>
    </location>
</feature>
<feature type="binding site" evidence="1">
    <location>
        <position position="53"/>
    </location>
    <ligand>
        <name>Zn(2+)</name>
        <dbReference type="ChEBI" id="CHEBI:29105"/>
    </ligand>
</feature>
<feature type="binding site" evidence="1">
    <location>
        <position position="56"/>
    </location>
    <ligand>
        <name>Zn(2+)</name>
        <dbReference type="ChEBI" id="CHEBI:29105"/>
    </ligand>
</feature>
<feature type="binding site" evidence="1">
    <location>
        <position position="147"/>
    </location>
    <ligand>
        <name>Zn(2+)</name>
        <dbReference type="ChEBI" id="CHEBI:29105"/>
    </ligand>
</feature>